<name>SBT47_ARATH</name>
<accession>F4KGD4</accession>
<accession>Q9FIM7</accession>
<keyword id="KW-0068">Autocatalytic cleavage</keyword>
<keyword id="KW-0325">Glycoprotein</keyword>
<keyword id="KW-0378">Hydrolase</keyword>
<keyword id="KW-0645">Protease</keyword>
<keyword id="KW-1185">Reference proteome</keyword>
<keyword id="KW-0964">Secreted</keyword>
<keyword id="KW-0720">Serine protease</keyword>
<keyword id="KW-0732">Signal</keyword>
<keyword id="KW-0865">Zymogen</keyword>
<dbReference type="EC" id="3.4.21.-" evidence="6"/>
<dbReference type="EMBL" id="AB016885">
    <property type="protein sequence ID" value="BAB09627.1"/>
    <property type="status" value="ALT_SEQ"/>
    <property type="molecule type" value="Genomic_DNA"/>
</dbReference>
<dbReference type="EMBL" id="CP002688">
    <property type="protein sequence ID" value="AED97107.1"/>
    <property type="molecule type" value="Genomic_DNA"/>
</dbReference>
<dbReference type="RefSeq" id="NP_568888.1">
    <property type="nucleotide sequence ID" value="NM_125272.2"/>
</dbReference>
<dbReference type="SMR" id="F4KGD4"/>
<dbReference type="FunCoup" id="F4KGD4">
    <property type="interactions" value="28"/>
</dbReference>
<dbReference type="MEROPS" id="S08.A11"/>
<dbReference type="GlyCosmos" id="F4KGD4">
    <property type="glycosylation" value="8 sites, No reported glycans"/>
</dbReference>
<dbReference type="GlyGen" id="F4KGD4">
    <property type="glycosylation" value="8 sites"/>
</dbReference>
<dbReference type="PaxDb" id="3702-AT5G58820.1"/>
<dbReference type="ProteomicsDB" id="232762"/>
<dbReference type="EnsemblPlants" id="AT5G58820.1">
    <property type="protein sequence ID" value="AT5G58820.1"/>
    <property type="gene ID" value="AT5G58820"/>
</dbReference>
<dbReference type="GeneID" id="835999"/>
<dbReference type="Gramene" id="AT5G58820.1">
    <property type="protein sequence ID" value="AT5G58820.1"/>
    <property type="gene ID" value="AT5G58820"/>
</dbReference>
<dbReference type="KEGG" id="ath:AT5G58820"/>
<dbReference type="Araport" id="AT5G58820"/>
<dbReference type="TAIR" id="AT5G58820"/>
<dbReference type="eggNOG" id="ENOG502QRA7">
    <property type="taxonomic scope" value="Eukaryota"/>
</dbReference>
<dbReference type="HOGENOM" id="CLU_000625_4_3_1"/>
<dbReference type="InParanoid" id="F4KGD4"/>
<dbReference type="OMA" id="KMATHND"/>
<dbReference type="PRO" id="PR:F4KGD4"/>
<dbReference type="Proteomes" id="UP000006548">
    <property type="component" value="Chromosome 5"/>
</dbReference>
<dbReference type="ExpressionAtlas" id="F4KGD4">
    <property type="expression patterns" value="baseline and differential"/>
</dbReference>
<dbReference type="GO" id="GO:0005576">
    <property type="term" value="C:extracellular region"/>
    <property type="evidence" value="ECO:0007669"/>
    <property type="project" value="UniProtKB-SubCell"/>
</dbReference>
<dbReference type="GO" id="GO:0004252">
    <property type="term" value="F:serine-type endopeptidase activity"/>
    <property type="evidence" value="ECO:0007669"/>
    <property type="project" value="InterPro"/>
</dbReference>
<dbReference type="GO" id="GO:0006508">
    <property type="term" value="P:proteolysis"/>
    <property type="evidence" value="ECO:0007669"/>
    <property type="project" value="UniProtKB-KW"/>
</dbReference>
<dbReference type="CDD" id="cd02120">
    <property type="entry name" value="PA_subtilisin_like"/>
    <property type="match status" value="1"/>
</dbReference>
<dbReference type="CDD" id="cd04852">
    <property type="entry name" value="Peptidases_S8_3"/>
    <property type="match status" value="1"/>
</dbReference>
<dbReference type="FunFam" id="3.30.70.80:FF:000002">
    <property type="entry name" value="Subtilisin-like protease SBT5.3"/>
    <property type="match status" value="1"/>
</dbReference>
<dbReference type="Gene3D" id="2.60.40.2310">
    <property type="match status" value="1"/>
</dbReference>
<dbReference type="Gene3D" id="3.50.30.30">
    <property type="match status" value="1"/>
</dbReference>
<dbReference type="Gene3D" id="3.30.70.80">
    <property type="entry name" value="Peptidase S8 propeptide/proteinase inhibitor I9"/>
    <property type="match status" value="1"/>
</dbReference>
<dbReference type="Gene3D" id="3.40.50.200">
    <property type="entry name" value="Peptidase S8/S53 domain"/>
    <property type="match status" value="1"/>
</dbReference>
<dbReference type="InterPro" id="IPR000209">
    <property type="entry name" value="Peptidase_S8/S53_dom"/>
</dbReference>
<dbReference type="InterPro" id="IPR036852">
    <property type="entry name" value="Peptidase_S8/S53_dom_sf"/>
</dbReference>
<dbReference type="InterPro" id="IPR023828">
    <property type="entry name" value="Peptidase_S8_Ser-AS"/>
</dbReference>
<dbReference type="InterPro" id="IPR015500">
    <property type="entry name" value="Peptidase_S8_subtilisin-rel"/>
</dbReference>
<dbReference type="InterPro" id="IPR034197">
    <property type="entry name" value="Peptidases_S8_3"/>
</dbReference>
<dbReference type="InterPro" id="IPR010259">
    <property type="entry name" value="S8pro/Inhibitor_I9"/>
</dbReference>
<dbReference type="InterPro" id="IPR037045">
    <property type="entry name" value="S8pro/Inhibitor_I9_sf"/>
</dbReference>
<dbReference type="InterPro" id="IPR045051">
    <property type="entry name" value="SBT"/>
</dbReference>
<dbReference type="InterPro" id="IPR041469">
    <property type="entry name" value="Subtilisin-like_FN3"/>
</dbReference>
<dbReference type="PANTHER" id="PTHR10795">
    <property type="entry name" value="PROPROTEIN CONVERTASE SUBTILISIN/KEXIN"/>
    <property type="match status" value="1"/>
</dbReference>
<dbReference type="Pfam" id="PF17766">
    <property type="entry name" value="fn3_6"/>
    <property type="match status" value="1"/>
</dbReference>
<dbReference type="Pfam" id="PF05922">
    <property type="entry name" value="Inhibitor_I9"/>
    <property type="match status" value="1"/>
</dbReference>
<dbReference type="Pfam" id="PF00082">
    <property type="entry name" value="Peptidase_S8"/>
    <property type="match status" value="1"/>
</dbReference>
<dbReference type="PRINTS" id="PR00723">
    <property type="entry name" value="SUBTILISIN"/>
</dbReference>
<dbReference type="SUPFAM" id="SSF52743">
    <property type="entry name" value="Subtilisin-like"/>
    <property type="match status" value="1"/>
</dbReference>
<dbReference type="PROSITE" id="PS51892">
    <property type="entry name" value="SUBTILASE"/>
    <property type="match status" value="1"/>
</dbReference>
<dbReference type="PROSITE" id="PS00138">
    <property type="entry name" value="SUBTILASE_SER"/>
    <property type="match status" value="1"/>
</dbReference>
<comment type="subcellular location">
    <subcellularLocation>
        <location evidence="2">Secreted</location>
    </subcellularLocation>
</comment>
<comment type="PTM">
    <text evidence="1">The C-terminal propeptide is autocleaved.</text>
</comment>
<comment type="similarity">
    <text evidence="8">Belongs to the peptidase S8 family.</text>
</comment>
<comment type="sequence caution" evidence="8">
    <conflict type="erroneous gene model prediction">
        <sequence resource="EMBL-CDS" id="BAB09627"/>
    </conflict>
</comment>
<gene>
    <name evidence="7" type="primary">SBT4.7</name>
    <name evidence="9" type="ordered locus">At5g58820</name>
    <name evidence="10" type="ORF">K19M22.2</name>
</gene>
<feature type="signal peptide" evidence="3">
    <location>
        <begin position="1"/>
        <end position="19"/>
    </location>
</feature>
<feature type="propeptide" id="PRO_0000435238" description="Activation peptide" evidence="1">
    <location>
        <begin position="20"/>
        <end position="107"/>
    </location>
</feature>
<feature type="chain" id="PRO_5003315641" description="Subtilisin-like protease SBT4.7" evidence="3">
    <location>
        <begin position="108"/>
        <end status="unknown"/>
    </location>
</feature>
<feature type="propeptide" id="PRO_0000435239" evidence="1">
    <location>
        <begin status="unknown"/>
        <end position="703"/>
    </location>
</feature>
<feature type="domain" description="Inhibitor I9" evidence="3">
    <location>
        <begin position="29"/>
        <end position="106"/>
    </location>
</feature>
<feature type="domain" description="Peptidase S8" evidence="5">
    <location>
        <begin position="111"/>
        <end position="556"/>
    </location>
</feature>
<feature type="domain" description="PA" evidence="3">
    <location>
        <begin position="350"/>
        <end position="411"/>
    </location>
</feature>
<feature type="active site" description="Charge relay system" evidence="5">
    <location>
        <position position="139"/>
    </location>
</feature>
<feature type="active site" description="Charge relay system" evidence="5">
    <location>
        <position position="194"/>
    </location>
</feature>
<feature type="active site" description="Charge relay system" evidence="5">
    <location>
        <position position="495"/>
    </location>
</feature>
<feature type="glycosylation site" description="N-linked (GlcNAc...) asparagine" evidence="4">
    <location>
        <position position="170"/>
    </location>
</feature>
<feature type="glycosylation site" description="N-linked (GlcNAc...) asparagine" evidence="4">
    <location>
        <position position="217"/>
    </location>
</feature>
<feature type="glycosylation site" description="N-linked (GlcNAc...) asparagine" evidence="4">
    <location>
        <position position="360"/>
    </location>
</feature>
<feature type="glycosylation site" description="N-linked (GlcNAc...) asparagine" evidence="4">
    <location>
        <position position="416"/>
    </location>
</feature>
<feature type="glycosylation site" description="N-linked (GlcNAc...) asparagine" evidence="4">
    <location>
        <position position="433"/>
    </location>
</feature>
<feature type="glycosylation site" description="N-linked (GlcNAc...) asparagine" evidence="4">
    <location>
        <position position="577"/>
    </location>
</feature>
<feature type="glycosylation site" description="N-linked (GlcNAc...) asparagine" evidence="4">
    <location>
        <position position="615"/>
    </location>
</feature>
<feature type="glycosylation site" description="N-linked (GlcNAc...) asparagine" evidence="4">
    <location>
        <position position="633"/>
    </location>
</feature>
<protein>
    <recommendedName>
        <fullName evidence="7">Subtilisin-like protease SBT4.7</fullName>
        <ecNumber evidence="6">3.4.21.-</ecNumber>
    </recommendedName>
    <alternativeName>
        <fullName evidence="7">Subtilase subfamily 4 member 7</fullName>
        <shortName evidence="7">AtSBT4.7</shortName>
    </alternativeName>
</protein>
<proteinExistence type="inferred from homology"/>
<sequence>MAKRDYFCFVVLFLSSVSAVIDDPQNKQVYVVYMGSLPSLLEYTPLSHHMSILQEVTGDSSVEGRLVRSYKRSFNGFAARLTESERIRVAEMEGVVSVFPNINYKLQTTASWDFLGLKEGKNTKRNLAIESDTIIGFIDSGIWPESESFSDKGFGPPPKKWKGVCSGGKNFTCNNKLIGARDYTSEGTRDLQGHGTHTASTAAGNAVADASFFGIGNGTARGGVPASRIAAYKVCSEKDCTAASLLSAFDDAIADGVDLISISLASEFPQKYYKDAIAIGAFHANVKGILTVNSAGNSGSFPSTTASVAPWILSVAASNTNRGFFTKVVLGNGKTLVGRSVNSFDLKGKKYPLVYGDNFNESLVQGKILVSKFPTSSKVAVGSILIDDYQHYALLSSKPFSLLPPDDFDSLVSYINSTRSPQGTFLKTEAFFNQTAPTVASFSSRGPNFIAVDLLKPDISAPGVEILAAYSPLGSPSEEESDKRRVKYSVMSGTSMSCPHVAGVAAYIRTFHPKWSPSVIQSAIMTTAWPMKPNRPGFASTEFAYGAGHVDQIAAINPGLVYELDKADHIAFLCGLNYTSKTLHLIAGEAVTCSGNTLPRNLNYPSMSAKIDGYNSSFTVTFKRTVTNLGTPNSTYKSKIVLNHGAKLVKVSPSVLSFKRVNEKQSFTVTFSGNLNLNLPTSANLIWSDGTHNVRSVIVVYTT</sequence>
<reference key="1">
    <citation type="journal article" date="1998" name="DNA Res.">
        <title>Structural analysis of Arabidopsis thaliana chromosome 5. VIII. Sequence features of the regions of 1,081,958 bp covered by seventeen physically assigned P1 and TAC clones.</title>
        <authorList>
            <person name="Asamizu E."/>
            <person name="Sato S."/>
            <person name="Kaneko T."/>
            <person name="Nakamura Y."/>
            <person name="Kotani H."/>
            <person name="Miyajima N."/>
            <person name="Tabata S."/>
        </authorList>
    </citation>
    <scope>NUCLEOTIDE SEQUENCE [LARGE SCALE GENOMIC DNA]</scope>
    <source>
        <strain>cv. Columbia</strain>
    </source>
</reference>
<reference key="2">
    <citation type="journal article" date="2017" name="Plant J.">
        <title>Araport11: a complete reannotation of the Arabidopsis thaliana reference genome.</title>
        <authorList>
            <person name="Cheng C.Y."/>
            <person name="Krishnakumar V."/>
            <person name="Chan A.P."/>
            <person name="Thibaud-Nissen F."/>
            <person name="Schobel S."/>
            <person name="Town C.D."/>
        </authorList>
    </citation>
    <scope>GENOME REANNOTATION</scope>
    <source>
        <strain>cv. Columbia</strain>
    </source>
</reference>
<reference key="3">
    <citation type="journal article" date="2005" name="PLoS Comput. Biol.">
        <title>Inferring hypotheses on functional relationships of genes: Analysis of the Arabidopsis thaliana subtilase gene family.</title>
        <authorList>
            <person name="Rautengarten C."/>
            <person name="Steinhauser D."/>
            <person name="Bussis D."/>
            <person name="Stintzi A."/>
            <person name="Schaller A."/>
            <person name="Kopka J."/>
            <person name="Altmann T."/>
        </authorList>
    </citation>
    <scope>GENE FAMILY</scope>
    <scope>NOMENCLATURE</scope>
</reference>
<organism evidence="11">
    <name type="scientific">Arabidopsis thaliana</name>
    <name type="common">Mouse-ear cress</name>
    <dbReference type="NCBI Taxonomy" id="3702"/>
    <lineage>
        <taxon>Eukaryota</taxon>
        <taxon>Viridiplantae</taxon>
        <taxon>Streptophyta</taxon>
        <taxon>Embryophyta</taxon>
        <taxon>Tracheophyta</taxon>
        <taxon>Spermatophyta</taxon>
        <taxon>Magnoliopsida</taxon>
        <taxon>eudicotyledons</taxon>
        <taxon>Gunneridae</taxon>
        <taxon>Pentapetalae</taxon>
        <taxon>rosids</taxon>
        <taxon>malvids</taxon>
        <taxon>Brassicales</taxon>
        <taxon>Brassicaceae</taxon>
        <taxon>Camelineae</taxon>
        <taxon>Arabidopsis</taxon>
    </lineage>
</organism>
<evidence type="ECO:0000250" key="1">
    <source>
        <dbReference type="UniProtKB" id="Q39547"/>
    </source>
</evidence>
<evidence type="ECO:0000250" key="2">
    <source>
        <dbReference type="UniProtKB" id="Q84WS0"/>
    </source>
</evidence>
<evidence type="ECO:0000255" key="3"/>
<evidence type="ECO:0000255" key="4">
    <source>
        <dbReference type="PROSITE-ProRule" id="PRU00498"/>
    </source>
</evidence>
<evidence type="ECO:0000255" key="5">
    <source>
        <dbReference type="PROSITE-ProRule" id="PRU01240"/>
    </source>
</evidence>
<evidence type="ECO:0000255" key="6">
    <source>
        <dbReference type="PROSITE-ProRule" id="PRU10082"/>
    </source>
</evidence>
<evidence type="ECO:0000303" key="7">
    <source>
    </source>
</evidence>
<evidence type="ECO:0000305" key="8"/>
<evidence type="ECO:0000312" key="9">
    <source>
        <dbReference type="Araport" id="AT5G58820"/>
    </source>
</evidence>
<evidence type="ECO:0000312" key="10">
    <source>
        <dbReference type="EMBL" id="BAB09627.1"/>
    </source>
</evidence>
<evidence type="ECO:0000312" key="11">
    <source>
        <dbReference type="Proteomes" id="UP000006548"/>
    </source>
</evidence>